<dbReference type="EMBL" id="CP000730">
    <property type="protein sequence ID" value="ABX28566.1"/>
    <property type="molecule type" value="Genomic_DNA"/>
</dbReference>
<dbReference type="RefSeq" id="WP_001137495.1">
    <property type="nucleotide sequence ID" value="NC_010079.1"/>
</dbReference>
<dbReference type="SMR" id="A8YZP4"/>
<dbReference type="GeneID" id="98344880"/>
<dbReference type="KEGG" id="sax:USA300HOU_0540"/>
<dbReference type="HOGENOM" id="CLU_072226_1_1_9"/>
<dbReference type="GO" id="GO:0015935">
    <property type="term" value="C:small ribosomal subunit"/>
    <property type="evidence" value="ECO:0007669"/>
    <property type="project" value="InterPro"/>
</dbReference>
<dbReference type="GO" id="GO:0019843">
    <property type="term" value="F:rRNA binding"/>
    <property type="evidence" value="ECO:0007669"/>
    <property type="project" value="UniProtKB-UniRule"/>
</dbReference>
<dbReference type="GO" id="GO:0003735">
    <property type="term" value="F:structural constituent of ribosome"/>
    <property type="evidence" value="ECO:0007669"/>
    <property type="project" value="InterPro"/>
</dbReference>
<dbReference type="GO" id="GO:0000049">
    <property type="term" value="F:tRNA binding"/>
    <property type="evidence" value="ECO:0007669"/>
    <property type="project" value="UniProtKB-UniRule"/>
</dbReference>
<dbReference type="GO" id="GO:0006412">
    <property type="term" value="P:translation"/>
    <property type="evidence" value="ECO:0007669"/>
    <property type="project" value="UniProtKB-UniRule"/>
</dbReference>
<dbReference type="CDD" id="cd14869">
    <property type="entry name" value="uS7_Bacteria"/>
    <property type="match status" value="1"/>
</dbReference>
<dbReference type="FunFam" id="1.10.455.10:FF:000001">
    <property type="entry name" value="30S ribosomal protein S7"/>
    <property type="match status" value="1"/>
</dbReference>
<dbReference type="Gene3D" id="1.10.455.10">
    <property type="entry name" value="Ribosomal protein S7 domain"/>
    <property type="match status" value="1"/>
</dbReference>
<dbReference type="HAMAP" id="MF_00480_B">
    <property type="entry name" value="Ribosomal_uS7_B"/>
    <property type="match status" value="1"/>
</dbReference>
<dbReference type="InterPro" id="IPR000235">
    <property type="entry name" value="Ribosomal_uS7"/>
</dbReference>
<dbReference type="InterPro" id="IPR005717">
    <property type="entry name" value="Ribosomal_uS7_bac/org-type"/>
</dbReference>
<dbReference type="InterPro" id="IPR020606">
    <property type="entry name" value="Ribosomal_uS7_CS"/>
</dbReference>
<dbReference type="InterPro" id="IPR023798">
    <property type="entry name" value="Ribosomal_uS7_dom"/>
</dbReference>
<dbReference type="InterPro" id="IPR036823">
    <property type="entry name" value="Ribosomal_uS7_dom_sf"/>
</dbReference>
<dbReference type="NCBIfam" id="TIGR01029">
    <property type="entry name" value="rpsG_bact"/>
    <property type="match status" value="1"/>
</dbReference>
<dbReference type="PANTHER" id="PTHR11205">
    <property type="entry name" value="RIBOSOMAL PROTEIN S7"/>
    <property type="match status" value="1"/>
</dbReference>
<dbReference type="Pfam" id="PF00177">
    <property type="entry name" value="Ribosomal_S7"/>
    <property type="match status" value="1"/>
</dbReference>
<dbReference type="PIRSF" id="PIRSF002122">
    <property type="entry name" value="RPS7p_RPS7a_RPS5e_RPS7o"/>
    <property type="match status" value="1"/>
</dbReference>
<dbReference type="SUPFAM" id="SSF47973">
    <property type="entry name" value="Ribosomal protein S7"/>
    <property type="match status" value="1"/>
</dbReference>
<dbReference type="PROSITE" id="PS00052">
    <property type="entry name" value="RIBOSOMAL_S7"/>
    <property type="match status" value="1"/>
</dbReference>
<reference key="1">
    <citation type="journal article" date="2007" name="BMC Microbiol.">
        <title>Subtle genetic changes enhance virulence of methicillin resistant and sensitive Staphylococcus aureus.</title>
        <authorList>
            <person name="Highlander S.K."/>
            <person name="Hulten K.G."/>
            <person name="Qin X."/>
            <person name="Jiang H."/>
            <person name="Yerrapragada S."/>
            <person name="Mason E.O. Jr."/>
            <person name="Shang Y."/>
            <person name="Williams T.M."/>
            <person name="Fortunov R.M."/>
            <person name="Liu Y."/>
            <person name="Igboeli O."/>
            <person name="Petrosino J."/>
            <person name="Tirumalai M."/>
            <person name="Uzman A."/>
            <person name="Fox G.E."/>
            <person name="Cardenas A.M."/>
            <person name="Muzny D.M."/>
            <person name="Hemphill L."/>
            <person name="Ding Y."/>
            <person name="Dugan S."/>
            <person name="Blyth P.R."/>
            <person name="Buhay C.J."/>
            <person name="Dinh H.H."/>
            <person name="Hawes A.C."/>
            <person name="Holder M."/>
            <person name="Kovar C.L."/>
            <person name="Lee S.L."/>
            <person name="Liu W."/>
            <person name="Nazareth L.V."/>
            <person name="Wang Q."/>
            <person name="Zhou J."/>
            <person name="Kaplan S.L."/>
            <person name="Weinstock G.M."/>
        </authorList>
    </citation>
    <scope>NUCLEOTIDE SEQUENCE [LARGE SCALE GENOMIC DNA]</scope>
    <source>
        <strain>USA300 / TCH1516</strain>
    </source>
</reference>
<organism>
    <name type="scientific">Staphylococcus aureus (strain USA300 / TCH1516)</name>
    <dbReference type="NCBI Taxonomy" id="451516"/>
    <lineage>
        <taxon>Bacteria</taxon>
        <taxon>Bacillati</taxon>
        <taxon>Bacillota</taxon>
        <taxon>Bacilli</taxon>
        <taxon>Bacillales</taxon>
        <taxon>Staphylococcaceae</taxon>
        <taxon>Staphylococcus</taxon>
    </lineage>
</organism>
<accession>A8YZP4</accession>
<sequence>MPRKGSVPKRDVLPDPIHNSKLVTKLINKIMLDGKRGTAQRILYSAFDLVEQRSGRDALEVFEEAINNIMPVLEVKARRVGGSNYQVPVEVRPERRTTLGLRWLVNYARLRGEKTMEDRLANEILDAANNTGGAVKKREDTHKMAEANKAFAHYRW</sequence>
<protein>
    <recommendedName>
        <fullName evidence="1">Small ribosomal subunit protein uS7</fullName>
    </recommendedName>
    <alternativeName>
        <fullName evidence="2">30S ribosomal protein S7</fullName>
    </alternativeName>
</protein>
<gene>
    <name evidence="1" type="primary">rpsG</name>
    <name type="ordered locus">USA300HOU_0540</name>
</gene>
<keyword id="KW-0687">Ribonucleoprotein</keyword>
<keyword id="KW-0689">Ribosomal protein</keyword>
<keyword id="KW-0694">RNA-binding</keyword>
<keyword id="KW-0699">rRNA-binding</keyword>
<keyword id="KW-0820">tRNA-binding</keyword>
<evidence type="ECO:0000255" key="1">
    <source>
        <dbReference type="HAMAP-Rule" id="MF_00480"/>
    </source>
</evidence>
<evidence type="ECO:0000305" key="2"/>
<name>RS7_STAAT</name>
<feature type="chain" id="PRO_1000081309" description="Small ribosomal subunit protein uS7">
    <location>
        <begin position="1"/>
        <end position="156"/>
    </location>
</feature>
<comment type="function">
    <text evidence="1">One of the primary rRNA binding proteins, it binds directly to 16S rRNA where it nucleates assembly of the head domain of the 30S subunit. Is located at the subunit interface close to the decoding center, probably blocks exit of the E-site tRNA.</text>
</comment>
<comment type="subunit">
    <text evidence="1">Part of the 30S ribosomal subunit. Contacts proteins S9 and S11.</text>
</comment>
<comment type="similarity">
    <text evidence="1">Belongs to the universal ribosomal protein uS7 family.</text>
</comment>
<proteinExistence type="inferred from homology"/>